<organism>
    <name type="scientific">Herpetosiphon aurantiacus (strain ATCC 23779 / DSM 785 / 114-95)</name>
    <dbReference type="NCBI Taxonomy" id="316274"/>
    <lineage>
        <taxon>Bacteria</taxon>
        <taxon>Bacillati</taxon>
        <taxon>Chloroflexota</taxon>
        <taxon>Chloroflexia</taxon>
        <taxon>Herpetosiphonales</taxon>
        <taxon>Herpetosiphonaceae</taxon>
        <taxon>Herpetosiphon</taxon>
    </lineage>
</organism>
<name>LON1_HERA2</name>
<feature type="chain" id="PRO_0000396575" description="Lon protease 1">
    <location>
        <begin position="1"/>
        <end position="815"/>
    </location>
</feature>
<feature type="domain" description="Lon N-terminal" evidence="3">
    <location>
        <begin position="14"/>
        <end position="211"/>
    </location>
</feature>
<feature type="domain" description="Lon proteolytic" evidence="2">
    <location>
        <begin position="606"/>
        <end position="787"/>
    </location>
</feature>
<feature type="active site" evidence="1">
    <location>
        <position position="693"/>
    </location>
</feature>
<feature type="active site" evidence="1">
    <location>
        <position position="736"/>
    </location>
</feature>
<feature type="binding site" evidence="1">
    <location>
        <begin position="370"/>
        <end position="377"/>
    </location>
    <ligand>
        <name>ATP</name>
        <dbReference type="ChEBI" id="CHEBI:30616"/>
    </ligand>
</feature>
<dbReference type="EC" id="3.4.21.53" evidence="1"/>
<dbReference type="EMBL" id="CP000875">
    <property type="protein sequence ID" value="ABX04264.1"/>
    <property type="molecule type" value="Genomic_DNA"/>
</dbReference>
<dbReference type="SMR" id="A9B5N1"/>
<dbReference type="STRING" id="316274.Haur_1621"/>
<dbReference type="KEGG" id="hau:Haur_1621"/>
<dbReference type="eggNOG" id="COG0466">
    <property type="taxonomic scope" value="Bacteria"/>
</dbReference>
<dbReference type="HOGENOM" id="CLU_004109_4_3_0"/>
<dbReference type="InParanoid" id="A9B5N1"/>
<dbReference type="Proteomes" id="UP000000787">
    <property type="component" value="Chromosome"/>
</dbReference>
<dbReference type="GO" id="GO:0005737">
    <property type="term" value="C:cytoplasm"/>
    <property type="evidence" value="ECO:0007669"/>
    <property type="project" value="UniProtKB-SubCell"/>
</dbReference>
<dbReference type="GO" id="GO:0005524">
    <property type="term" value="F:ATP binding"/>
    <property type="evidence" value="ECO:0007669"/>
    <property type="project" value="UniProtKB-UniRule"/>
</dbReference>
<dbReference type="GO" id="GO:0016887">
    <property type="term" value="F:ATP hydrolysis activity"/>
    <property type="evidence" value="ECO:0007669"/>
    <property type="project" value="UniProtKB-UniRule"/>
</dbReference>
<dbReference type="GO" id="GO:0004176">
    <property type="term" value="F:ATP-dependent peptidase activity"/>
    <property type="evidence" value="ECO:0007669"/>
    <property type="project" value="UniProtKB-UniRule"/>
</dbReference>
<dbReference type="GO" id="GO:0043565">
    <property type="term" value="F:sequence-specific DNA binding"/>
    <property type="evidence" value="ECO:0007669"/>
    <property type="project" value="UniProtKB-UniRule"/>
</dbReference>
<dbReference type="GO" id="GO:0004252">
    <property type="term" value="F:serine-type endopeptidase activity"/>
    <property type="evidence" value="ECO:0007669"/>
    <property type="project" value="UniProtKB-UniRule"/>
</dbReference>
<dbReference type="GO" id="GO:0034605">
    <property type="term" value="P:cellular response to heat"/>
    <property type="evidence" value="ECO:0007669"/>
    <property type="project" value="UniProtKB-UniRule"/>
</dbReference>
<dbReference type="GO" id="GO:0006515">
    <property type="term" value="P:protein quality control for misfolded or incompletely synthesized proteins"/>
    <property type="evidence" value="ECO:0007669"/>
    <property type="project" value="UniProtKB-UniRule"/>
</dbReference>
<dbReference type="CDD" id="cd19500">
    <property type="entry name" value="RecA-like_Lon"/>
    <property type="match status" value="1"/>
</dbReference>
<dbReference type="FunFam" id="1.20.5.5270:FF:000002">
    <property type="entry name" value="Lon protease homolog"/>
    <property type="match status" value="1"/>
</dbReference>
<dbReference type="FunFam" id="3.40.50.300:FF:000382">
    <property type="entry name" value="Lon protease homolog 2, peroxisomal"/>
    <property type="match status" value="1"/>
</dbReference>
<dbReference type="Gene3D" id="1.10.8.60">
    <property type="match status" value="1"/>
</dbReference>
<dbReference type="Gene3D" id="1.20.5.5270">
    <property type="match status" value="1"/>
</dbReference>
<dbReference type="Gene3D" id="1.20.58.1480">
    <property type="match status" value="1"/>
</dbReference>
<dbReference type="Gene3D" id="3.30.230.10">
    <property type="match status" value="1"/>
</dbReference>
<dbReference type="Gene3D" id="2.30.130.40">
    <property type="entry name" value="LON domain-like"/>
    <property type="match status" value="1"/>
</dbReference>
<dbReference type="Gene3D" id="3.40.50.300">
    <property type="entry name" value="P-loop containing nucleotide triphosphate hydrolases"/>
    <property type="match status" value="1"/>
</dbReference>
<dbReference type="HAMAP" id="MF_01973">
    <property type="entry name" value="lon_bact"/>
    <property type="match status" value="1"/>
</dbReference>
<dbReference type="InterPro" id="IPR003593">
    <property type="entry name" value="AAA+_ATPase"/>
</dbReference>
<dbReference type="InterPro" id="IPR003959">
    <property type="entry name" value="ATPase_AAA_core"/>
</dbReference>
<dbReference type="InterPro" id="IPR027543">
    <property type="entry name" value="Lon_bac"/>
</dbReference>
<dbReference type="InterPro" id="IPR004815">
    <property type="entry name" value="Lon_bac/euk-typ"/>
</dbReference>
<dbReference type="InterPro" id="IPR054594">
    <property type="entry name" value="Lon_lid"/>
</dbReference>
<dbReference type="InterPro" id="IPR008269">
    <property type="entry name" value="Lon_proteolytic"/>
</dbReference>
<dbReference type="InterPro" id="IPR027065">
    <property type="entry name" value="Lon_Prtase"/>
</dbReference>
<dbReference type="InterPro" id="IPR003111">
    <property type="entry name" value="Lon_prtase_N"/>
</dbReference>
<dbReference type="InterPro" id="IPR046336">
    <property type="entry name" value="Lon_prtase_N_sf"/>
</dbReference>
<dbReference type="InterPro" id="IPR027417">
    <property type="entry name" value="P-loop_NTPase"/>
</dbReference>
<dbReference type="InterPro" id="IPR008268">
    <property type="entry name" value="Peptidase_S16_AS"/>
</dbReference>
<dbReference type="InterPro" id="IPR015947">
    <property type="entry name" value="PUA-like_sf"/>
</dbReference>
<dbReference type="InterPro" id="IPR020568">
    <property type="entry name" value="Ribosomal_Su5_D2-typ_SF"/>
</dbReference>
<dbReference type="InterPro" id="IPR014721">
    <property type="entry name" value="Ribsml_uS5_D2-typ_fold_subgr"/>
</dbReference>
<dbReference type="NCBIfam" id="TIGR00763">
    <property type="entry name" value="lon"/>
    <property type="match status" value="1"/>
</dbReference>
<dbReference type="PANTHER" id="PTHR10046">
    <property type="entry name" value="ATP DEPENDENT LON PROTEASE FAMILY MEMBER"/>
    <property type="match status" value="1"/>
</dbReference>
<dbReference type="Pfam" id="PF00004">
    <property type="entry name" value="AAA"/>
    <property type="match status" value="1"/>
</dbReference>
<dbReference type="Pfam" id="PF05362">
    <property type="entry name" value="Lon_C"/>
    <property type="match status" value="1"/>
</dbReference>
<dbReference type="Pfam" id="PF22667">
    <property type="entry name" value="Lon_lid"/>
    <property type="match status" value="1"/>
</dbReference>
<dbReference type="Pfam" id="PF02190">
    <property type="entry name" value="LON_substr_bdg"/>
    <property type="match status" value="1"/>
</dbReference>
<dbReference type="PIRSF" id="PIRSF001174">
    <property type="entry name" value="Lon_proteas"/>
    <property type="match status" value="1"/>
</dbReference>
<dbReference type="PRINTS" id="PR00830">
    <property type="entry name" value="ENDOLAPTASE"/>
</dbReference>
<dbReference type="SMART" id="SM00382">
    <property type="entry name" value="AAA"/>
    <property type="match status" value="1"/>
</dbReference>
<dbReference type="SMART" id="SM00464">
    <property type="entry name" value="LON"/>
    <property type="match status" value="1"/>
</dbReference>
<dbReference type="SUPFAM" id="SSF52540">
    <property type="entry name" value="P-loop containing nucleoside triphosphate hydrolases"/>
    <property type="match status" value="1"/>
</dbReference>
<dbReference type="SUPFAM" id="SSF88697">
    <property type="entry name" value="PUA domain-like"/>
    <property type="match status" value="1"/>
</dbReference>
<dbReference type="SUPFAM" id="SSF54211">
    <property type="entry name" value="Ribosomal protein S5 domain 2-like"/>
    <property type="match status" value="1"/>
</dbReference>
<dbReference type="PROSITE" id="PS51787">
    <property type="entry name" value="LON_N"/>
    <property type="match status" value="1"/>
</dbReference>
<dbReference type="PROSITE" id="PS51786">
    <property type="entry name" value="LON_PROTEOLYTIC"/>
    <property type="match status" value="1"/>
</dbReference>
<dbReference type="PROSITE" id="PS01046">
    <property type="entry name" value="LON_SER"/>
    <property type="match status" value="1"/>
</dbReference>
<sequence>MSEVERTTTIPDEIAILPLLGTVAYPQTIMPLAIGQPESIRLIDDLMAGQRIVGLMALKNEDERPNPVLPEDFYQLGSAAVVHKLMKLPDGTLRAAMQVLERIEIVEIIQTEPYYRAKIRVMPDALAESEQLEVTALMRSIGTIASQIAPLIPQFPTELLNSVLSEEDPRRLAYLVASYARMSVTDRQAVLAEPSIKQKLLKLNEVLTRELNVLQIGQQIQSQVQDEMSKTQREYVLREQLKAIRKELGENNEQEVEVDRLAEQIEAAGMSAEAHQQAMRELDRLRQMPTAAAEYSVIRGYLETLIALPWQKRSDDTIDVAQATEVLDADHYGLDEIKERILDYLAVRELRRKRSPERDPGRGAILCFVGPPGVGKTSLGRSIAKAMNREFVRLSLGGVHDEAEIRGHRRTYIGAMPGSLIQAIRRSGVNNPVVLLDEIDKLSSDHRGDPTSAMLEVLDPAQNTNFRDHYLDVAWDLSPVMFIATANTLQTIPAPLRDRLEIIQLGSYTMREKYEIASRYLVPEQREQHSLAPNEVEIDHEALLVAIEEYTREAGVRNLEQQIGTLMRKAARQVALGSATPIVLDPAKTREYLGKRRYFSEIHERTDRPGIVTGLVWTPVGGDIIFIEATKMTGRGNFALSGQLGDVMKESARAALSWVRAEGEAYGIDPNFAQHYDLHVHVPAGAQPKDGPSAGIAMATALVSLLTGRVLRDDVAMTGEITLRGKVLPIGGVREKVLAAHRAGIRTIILPQRNLADLDEIPADVLAEVQFHGVEHVGQVIELALRAEASEAPVSVPESAVMPNLFQSDVEVLVH</sequence>
<comment type="function">
    <text evidence="1">ATP-dependent serine protease that mediates the selective degradation of mutant and abnormal proteins as well as certain short-lived regulatory proteins. Required for cellular homeostasis and for survival from DNA damage and developmental changes induced by stress. Degrades polypeptides processively to yield small peptide fragments that are 5 to 10 amino acids long. Binds to DNA in a double-stranded, site-specific manner.</text>
</comment>
<comment type="catalytic activity">
    <reaction evidence="1">
        <text>Hydrolysis of proteins in presence of ATP.</text>
        <dbReference type="EC" id="3.4.21.53"/>
    </reaction>
</comment>
<comment type="subunit">
    <text evidence="1">Homohexamer. Organized in a ring with a central cavity.</text>
</comment>
<comment type="subcellular location">
    <subcellularLocation>
        <location evidence="1">Cytoplasm</location>
    </subcellularLocation>
</comment>
<comment type="induction">
    <text evidence="1">By heat shock.</text>
</comment>
<comment type="similarity">
    <text evidence="1">Belongs to the peptidase S16 family.</text>
</comment>
<accession>A9B5N1</accession>
<gene>
    <name evidence="1" type="primary">lon1</name>
    <name type="ordered locus">Haur_1621</name>
</gene>
<keyword id="KW-0067">ATP-binding</keyword>
<keyword id="KW-0963">Cytoplasm</keyword>
<keyword id="KW-0378">Hydrolase</keyword>
<keyword id="KW-0547">Nucleotide-binding</keyword>
<keyword id="KW-0645">Protease</keyword>
<keyword id="KW-0720">Serine protease</keyword>
<keyword id="KW-0346">Stress response</keyword>
<proteinExistence type="inferred from homology"/>
<reference key="1">
    <citation type="journal article" date="2011" name="Stand. Genomic Sci.">
        <title>Complete genome sequence of the filamentous gliding predatory bacterium Herpetosiphon aurantiacus type strain (114-95(T)).</title>
        <authorList>
            <person name="Kiss H."/>
            <person name="Nett M."/>
            <person name="Domin N."/>
            <person name="Martin K."/>
            <person name="Maresca J.A."/>
            <person name="Copeland A."/>
            <person name="Lapidus A."/>
            <person name="Lucas S."/>
            <person name="Berry K.W."/>
            <person name="Glavina Del Rio T."/>
            <person name="Dalin E."/>
            <person name="Tice H."/>
            <person name="Pitluck S."/>
            <person name="Richardson P."/>
            <person name="Bruce D."/>
            <person name="Goodwin L."/>
            <person name="Han C."/>
            <person name="Detter J.C."/>
            <person name="Schmutz J."/>
            <person name="Brettin T."/>
            <person name="Land M."/>
            <person name="Hauser L."/>
            <person name="Kyrpides N.C."/>
            <person name="Ivanova N."/>
            <person name="Goeker M."/>
            <person name="Woyke T."/>
            <person name="Klenk H.P."/>
            <person name="Bryant D.A."/>
        </authorList>
    </citation>
    <scope>NUCLEOTIDE SEQUENCE [LARGE SCALE GENOMIC DNA]</scope>
    <source>
        <strain>ATCC 23779 / DSM 785 / 114-95</strain>
    </source>
</reference>
<evidence type="ECO:0000255" key="1">
    <source>
        <dbReference type="HAMAP-Rule" id="MF_01973"/>
    </source>
</evidence>
<evidence type="ECO:0000255" key="2">
    <source>
        <dbReference type="PROSITE-ProRule" id="PRU01122"/>
    </source>
</evidence>
<evidence type="ECO:0000255" key="3">
    <source>
        <dbReference type="PROSITE-ProRule" id="PRU01123"/>
    </source>
</evidence>
<protein>
    <recommendedName>
        <fullName evidence="1">Lon protease 1</fullName>
        <ecNumber evidence="1">3.4.21.53</ecNumber>
    </recommendedName>
    <alternativeName>
        <fullName evidence="1">ATP-dependent protease La 1</fullName>
    </alternativeName>
</protein>